<proteinExistence type="inferred from homology"/>
<protein>
    <recommendedName>
        <fullName>Flagellar biosynthesis protein FlhA</fullName>
    </recommendedName>
</protein>
<organism>
    <name type="scientific">Treponema pallidum (strain Nichols)</name>
    <dbReference type="NCBI Taxonomy" id="243276"/>
    <lineage>
        <taxon>Bacteria</taxon>
        <taxon>Pseudomonadati</taxon>
        <taxon>Spirochaetota</taxon>
        <taxon>Spirochaetia</taxon>
        <taxon>Spirochaetales</taxon>
        <taxon>Treponemataceae</taxon>
        <taxon>Treponema</taxon>
    </lineage>
</organism>
<name>FLHA_TREPA</name>
<keyword id="KW-1005">Bacterial flagellum biogenesis</keyword>
<keyword id="KW-1006">Bacterial flagellum protein export</keyword>
<keyword id="KW-1003">Cell membrane</keyword>
<keyword id="KW-0472">Membrane</keyword>
<keyword id="KW-0653">Protein transport</keyword>
<keyword id="KW-1185">Reference proteome</keyword>
<keyword id="KW-0812">Transmembrane</keyword>
<keyword id="KW-1133">Transmembrane helix</keyword>
<keyword id="KW-0813">Transport</keyword>
<accession>Q56338</accession>
<comment type="function">
    <text>Involved in the export of flagellum proteins.</text>
</comment>
<comment type="subcellular location">
    <subcellularLocation>
        <location evidence="3">Cell membrane</location>
        <topology evidence="3">Multi-pass membrane protein</topology>
    </subcellularLocation>
</comment>
<comment type="similarity">
    <text evidence="3">Belongs to the FHIPEP (flagella/HR/invasion proteins export pore) family.</text>
</comment>
<reference key="1">
    <citation type="journal article" date="1997" name="DNA Seq.">
        <title>Identification and sequences of the Treponema pallidum flhA, flhF, and orf304 genes.</title>
        <authorList>
            <person name="Hardham J.M."/>
            <person name="Frye J.G."/>
            <person name="Young N.R."/>
            <person name="Stamm L.V."/>
        </authorList>
    </citation>
    <scope>NUCLEOTIDE SEQUENCE [GENOMIC DNA]</scope>
    <source>
        <strain>Nichols</strain>
    </source>
</reference>
<reference key="2">
    <citation type="journal article" date="1998" name="Science">
        <title>Complete genome sequence of Treponema pallidum, the syphilis spirochete.</title>
        <authorList>
            <person name="Fraser C.M."/>
            <person name="Norris S.J."/>
            <person name="Weinstock G.M."/>
            <person name="White O."/>
            <person name="Sutton G.G."/>
            <person name="Dodson R.J."/>
            <person name="Gwinn M.L."/>
            <person name="Hickey E.K."/>
            <person name="Clayton R.A."/>
            <person name="Ketchum K.A."/>
            <person name="Sodergren E."/>
            <person name="Hardham J.M."/>
            <person name="McLeod M.P."/>
            <person name="Salzberg S.L."/>
            <person name="Peterson J.D."/>
            <person name="Khalak H.G."/>
            <person name="Richardson D.L."/>
            <person name="Howell J.K."/>
            <person name="Chidambaram M."/>
            <person name="Utterback T.R."/>
            <person name="McDonald L.A."/>
            <person name="Artiach P."/>
            <person name="Bowman C."/>
            <person name="Cotton M.D."/>
            <person name="Fujii C."/>
            <person name="Garland S.A."/>
            <person name="Hatch B."/>
            <person name="Horst K."/>
            <person name="Roberts K.M."/>
            <person name="Sandusky M."/>
            <person name="Weidman J.F."/>
            <person name="Smith H.O."/>
            <person name="Venter J.C."/>
        </authorList>
    </citation>
    <scope>NUCLEOTIDE SEQUENCE [LARGE SCALE GENOMIC DNA]</scope>
    <source>
        <strain>Nichols</strain>
    </source>
</reference>
<gene>
    <name type="primary">flhA</name>
    <name type="ordered locus">TP_0714</name>
</gene>
<evidence type="ECO:0000255" key="1"/>
<evidence type="ECO:0000256" key="2">
    <source>
        <dbReference type="SAM" id="MobiDB-lite"/>
    </source>
</evidence>
<evidence type="ECO:0000305" key="3"/>
<dbReference type="EMBL" id="U36839">
    <property type="protein sequence ID" value="AAB00550.1"/>
    <property type="molecule type" value="Genomic_DNA"/>
</dbReference>
<dbReference type="EMBL" id="AE000520">
    <property type="protein sequence ID" value="AAC65680.1"/>
    <property type="molecule type" value="Genomic_DNA"/>
</dbReference>
<dbReference type="PIR" id="F71290">
    <property type="entry name" value="F71290"/>
</dbReference>
<dbReference type="RefSeq" id="WP_010882159.1">
    <property type="nucleotide sequence ID" value="NC_021490.2"/>
</dbReference>
<dbReference type="SMR" id="Q56338"/>
<dbReference type="IntAct" id="Q56338">
    <property type="interactions" value="2"/>
</dbReference>
<dbReference type="STRING" id="243276.TP_0714"/>
<dbReference type="EnsemblBacteria" id="AAC65680">
    <property type="protein sequence ID" value="AAC65680"/>
    <property type="gene ID" value="TP_0714"/>
</dbReference>
<dbReference type="GeneID" id="93876483"/>
<dbReference type="KEGG" id="tpa:TP_0714"/>
<dbReference type="KEGG" id="tpw:TPANIC_0714"/>
<dbReference type="eggNOG" id="COG1298">
    <property type="taxonomic scope" value="Bacteria"/>
</dbReference>
<dbReference type="HOGENOM" id="CLU_015346_3_0_12"/>
<dbReference type="OrthoDB" id="9759185at2"/>
<dbReference type="Proteomes" id="UP000000811">
    <property type="component" value="Chromosome"/>
</dbReference>
<dbReference type="GO" id="GO:0005886">
    <property type="term" value="C:plasma membrane"/>
    <property type="evidence" value="ECO:0007669"/>
    <property type="project" value="UniProtKB-SubCell"/>
</dbReference>
<dbReference type="GO" id="GO:0044780">
    <property type="term" value="P:bacterial-type flagellum assembly"/>
    <property type="evidence" value="ECO:0007669"/>
    <property type="project" value="InterPro"/>
</dbReference>
<dbReference type="GO" id="GO:0009306">
    <property type="term" value="P:protein secretion"/>
    <property type="evidence" value="ECO:0007669"/>
    <property type="project" value="InterPro"/>
</dbReference>
<dbReference type="Gene3D" id="3.40.30.60">
    <property type="entry name" value="FHIPEP family, domain 1"/>
    <property type="match status" value="1"/>
</dbReference>
<dbReference type="Gene3D" id="1.10.8.540">
    <property type="entry name" value="FHIPEP family, domain 3"/>
    <property type="match status" value="1"/>
</dbReference>
<dbReference type="Gene3D" id="3.40.50.12790">
    <property type="entry name" value="FHIPEP family, domain 4"/>
    <property type="match status" value="1"/>
</dbReference>
<dbReference type="InterPro" id="IPR042194">
    <property type="entry name" value="FHIPEP_1"/>
</dbReference>
<dbReference type="InterPro" id="IPR042193">
    <property type="entry name" value="FHIPEP_3"/>
</dbReference>
<dbReference type="InterPro" id="IPR042196">
    <property type="entry name" value="FHIPEP_4"/>
</dbReference>
<dbReference type="InterPro" id="IPR006301">
    <property type="entry name" value="FlhA"/>
</dbReference>
<dbReference type="InterPro" id="IPR001712">
    <property type="entry name" value="T3SS_FHIPEP"/>
</dbReference>
<dbReference type="NCBIfam" id="TIGR01398">
    <property type="entry name" value="FlhA"/>
    <property type="match status" value="1"/>
</dbReference>
<dbReference type="PANTHER" id="PTHR30161:SF1">
    <property type="entry name" value="FLAGELLAR BIOSYNTHESIS PROTEIN FLHA-RELATED"/>
    <property type="match status" value="1"/>
</dbReference>
<dbReference type="PANTHER" id="PTHR30161">
    <property type="entry name" value="FLAGELLAR EXPORT PROTEIN, MEMBRANE FLHA SUBUNIT-RELATED"/>
    <property type="match status" value="1"/>
</dbReference>
<dbReference type="Pfam" id="PF00771">
    <property type="entry name" value="FHIPEP"/>
    <property type="match status" value="1"/>
</dbReference>
<dbReference type="PIRSF" id="PIRSF005419">
    <property type="entry name" value="FlhA"/>
    <property type="match status" value="1"/>
</dbReference>
<dbReference type="PRINTS" id="PR00949">
    <property type="entry name" value="TYPE3IMAPROT"/>
</dbReference>
<feature type="chain" id="PRO_0000190021" description="Flagellar biosynthesis protein FlhA">
    <location>
        <begin position="1"/>
        <end position="707"/>
    </location>
</feature>
<feature type="transmembrane region" description="Helical" evidence="1">
    <location>
        <begin position="8"/>
        <end position="28"/>
    </location>
</feature>
<feature type="transmembrane region" description="Helical" evidence="1">
    <location>
        <begin position="34"/>
        <end position="54"/>
    </location>
</feature>
<feature type="transmembrane region" description="Helical" evidence="1">
    <location>
        <begin position="62"/>
        <end position="82"/>
    </location>
</feature>
<feature type="transmembrane region" description="Helical" evidence="1">
    <location>
        <begin position="114"/>
        <end position="134"/>
    </location>
</feature>
<feature type="transmembrane region" description="Helical" evidence="1">
    <location>
        <begin position="202"/>
        <end position="222"/>
    </location>
</feature>
<feature type="transmembrane region" description="Helical" evidence="1">
    <location>
        <begin position="239"/>
        <end position="259"/>
    </location>
</feature>
<feature type="transmembrane region" description="Helical" evidence="1">
    <location>
        <begin position="290"/>
        <end position="310"/>
    </location>
</feature>
<feature type="region of interest" description="Disordered" evidence="2">
    <location>
        <begin position="329"/>
        <end position="350"/>
    </location>
</feature>
<feature type="compositionally biased region" description="Basic and acidic residues" evidence="2">
    <location>
        <begin position="329"/>
        <end position="340"/>
    </location>
</feature>
<feature type="compositionally biased region" description="Polar residues" evidence="2">
    <location>
        <begin position="341"/>
        <end position="350"/>
    </location>
</feature>
<sequence length="707" mass="77944">MAHGKSAFFTTDAFVAISVLVVVFSIVVPLPTQILDALMAFNLIFNLLILLMVLFVEKPTDFSVFPSLLLTSTVFGLGLNVSSTRLILTLGDRFSGYMIRAFSSFVVGGSGTQGLVIGFTVFIILIAVQAFVITKGATRIAEVAARFTLDFNATKSMSIDAEYNAGVITEEEARERKRQIQREADFFGAMDGASKFVSGNVKIGIFITIVNVIAGLIVGVIFRREGFQAALQTYTNLTIGDGLLAQLPSLLLSVATGFIVTRSSDQGSFGQNVQEQFSKSALVYFIGSGALIVMAVLPGFPHSILFFMAVCFAFVGLQLRKRERVHVQEHEMQKSSDKKGMQQTQDSTSEMGPIVPLDPLSLELGYGLIPLVDKEKGAELLSRITVIRKDAALDLGLVAPKIRIIDNMRLDPSSYCFKIQGLEVARGKLRLGWFLAIKSGQVTEEVPGERTIDPTFGLPAVWISEENRDRAERVGYTVVAPSAIIATHLTQVIRTNAADILGRQNVQMIIDALRKEYPAVVDDVTQKCPLGKIQKVLQGLLREQVSIRNTVAIFETLADFASTSDTVPVPILIEKVRQRLGRQICLQYADEQNVLHVMRLDSSLETFLSEKIALTVDSLSILTLSLDEQRQVLQAVRTVFVPTRQEGYIPVLLTTDTIRSAMWNLFFSDRIEIAVMSYKEVSTDMRIETVGVVRIEESDVDAFVRKQ</sequence>